<keyword id="KW-0002">3D-structure</keyword>
<keyword id="KW-0007">Acetylation</keyword>
<keyword id="KW-0963">Cytoplasm</keyword>
<keyword id="KW-0903">Direct protein sequencing</keyword>
<keyword id="KW-1017">Isopeptide bond</keyword>
<keyword id="KW-0597">Phosphoprotein</keyword>
<keyword id="KW-1185">Reference proteome</keyword>
<keyword id="KW-0687">Ribonucleoprotein</keyword>
<keyword id="KW-0689">Ribosomal protein</keyword>
<keyword id="KW-0832">Ubl conjugation</keyword>
<proteinExistence type="evidence at protein level"/>
<reference key="1">
    <citation type="journal article" date="1995" name="Nucleic Acids Res.">
        <title>Cloning and characterisation of the gene encoding the ribosomal protein S5 (also known as rp14, S2, YS8) of Saccharomyces cerevisiae.</title>
        <authorList>
            <person name="Ignatovich O."/>
            <person name="Cooper M."/>
            <person name="Kulesza H.M."/>
            <person name="Beggs J.D."/>
        </authorList>
    </citation>
    <scope>NUCLEOTIDE SEQUENCE [GENOMIC DNA]</scope>
</reference>
<reference key="2">
    <citation type="journal article" date="1996" name="EMBO J.">
        <title>Complete nucleotide sequence of Saccharomyces cerevisiae chromosome X.</title>
        <authorList>
            <person name="Galibert F."/>
            <person name="Alexandraki D."/>
            <person name="Baur A."/>
            <person name="Boles E."/>
            <person name="Chalwatzis N."/>
            <person name="Chuat J.-C."/>
            <person name="Coster F."/>
            <person name="Cziepluch C."/>
            <person name="de Haan M."/>
            <person name="Domdey H."/>
            <person name="Durand P."/>
            <person name="Entian K.-D."/>
            <person name="Gatius M."/>
            <person name="Goffeau A."/>
            <person name="Grivell L.A."/>
            <person name="Hennemann A."/>
            <person name="Herbert C.J."/>
            <person name="Heumann K."/>
            <person name="Hilger F."/>
            <person name="Hollenberg C.P."/>
            <person name="Huang M.-E."/>
            <person name="Jacq C."/>
            <person name="Jauniaux J.-C."/>
            <person name="Katsoulou C."/>
            <person name="Kirchrath L."/>
            <person name="Kleine K."/>
            <person name="Kordes E."/>
            <person name="Koetter P."/>
            <person name="Liebl S."/>
            <person name="Louis E.J."/>
            <person name="Manus V."/>
            <person name="Mewes H.-W."/>
            <person name="Miosga T."/>
            <person name="Obermaier B."/>
            <person name="Perea J."/>
            <person name="Pohl T.M."/>
            <person name="Portetelle D."/>
            <person name="Pujol A."/>
            <person name="Purnelle B."/>
            <person name="Ramezani Rad M."/>
            <person name="Rasmussen S.W."/>
            <person name="Rose M."/>
            <person name="Rossau R."/>
            <person name="Schaaff-Gerstenschlaeger I."/>
            <person name="Smits P.H.M."/>
            <person name="Scarcez T."/>
            <person name="Soriano N."/>
            <person name="To Van D."/>
            <person name="Tzermia M."/>
            <person name="Van Broekhoven A."/>
            <person name="Vandenbol M."/>
            <person name="Wedler H."/>
            <person name="von Wettstein D."/>
            <person name="Wambutt R."/>
            <person name="Zagulski M."/>
            <person name="Zollner A."/>
            <person name="Karpfinger-Hartl L."/>
        </authorList>
    </citation>
    <scope>NUCLEOTIDE SEQUENCE [LARGE SCALE GENOMIC DNA]</scope>
    <source>
        <strain>ATCC 204508 / S288c</strain>
    </source>
</reference>
<reference key="3">
    <citation type="journal article" date="2014" name="G3 (Bethesda)">
        <title>The reference genome sequence of Saccharomyces cerevisiae: Then and now.</title>
        <authorList>
            <person name="Engel S.R."/>
            <person name="Dietrich F.S."/>
            <person name="Fisk D.G."/>
            <person name="Binkley G."/>
            <person name="Balakrishnan R."/>
            <person name="Costanzo M.C."/>
            <person name="Dwight S.S."/>
            <person name="Hitz B.C."/>
            <person name="Karra K."/>
            <person name="Nash R.S."/>
            <person name="Weng S."/>
            <person name="Wong E.D."/>
            <person name="Lloyd P."/>
            <person name="Skrzypek M.S."/>
            <person name="Miyasato S.R."/>
            <person name="Simison M."/>
            <person name="Cherry J.M."/>
        </authorList>
    </citation>
    <scope>GENOME REANNOTATION</scope>
    <source>
        <strain>ATCC 204508 / S288c</strain>
    </source>
</reference>
<reference key="4">
    <citation type="journal article" date="2007" name="Genome Res.">
        <title>Approaching a complete repository of sequence-verified protein-encoding clones for Saccharomyces cerevisiae.</title>
        <authorList>
            <person name="Hu Y."/>
            <person name="Rolfs A."/>
            <person name="Bhullar B."/>
            <person name="Murthy T.V.S."/>
            <person name="Zhu C."/>
            <person name="Berger M.F."/>
            <person name="Camargo A.A."/>
            <person name="Kelley F."/>
            <person name="McCarron S."/>
            <person name="Jepson D."/>
            <person name="Richardson A."/>
            <person name="Raphael J."/>
            <person name="Moreira D."/>
            <person name="Taycher E."/>
            <person name="Zuo D."/>
            <person name="Mohr S."/>
            <person name="Kane M.F."/>
            <person name="Williamson J."/>
            <person name="Simpson A.J.G."/>
            <person name="Bulyk M.L."/>
            <person name="Harlow E."/>
            <person name="Marsischky G."/>
            <person name="Kolodner R.D."/>
            <person name="LaBaer J."/>
        </authorList>
    </citation>
    <scope>NUCLEOTIDE SEQUENCE [GENOMIC DNA]</scope>
    <source>
        <strain>ATCC 204508 / S288c</strain>
    </source>
</reference>
<reference key="5">
    <citation type="journal article" date="1992" name="J. Biol. Chem.">
        <title>NH2-terminal acetylation of ribosomal proteins of Saccharomyces cerevisiae.</title>
        <authorList>
            <person name="Takakura H."/>
            <person name="Tsunasawa S."/>
            <person name="Miyagi M."/>
            <person name="Warner J.R."/>
        </authorList>
    </citation>
    <scope>PROTEIN SEQUENCE OF 2-21</scope>
    <scope>ACETYLATION AT SER-2 BY NATA</scope>
</reference>
<reference key="6">
    <citation type="journal article" date="1998" name="Yeast">
        <title>The list of cytoplasmic ribosomal proteins of Saccharomyces cerevisiae.</title>
        <authorList>
            <person name="Planta R.J."/>
            <person name="Mager W.H."/>
        </authorList>
    </citation>
    <scope>NOMENCLATURE</scope>
    <scope>SUBUNIT</scope>
</reference>
<reference key="7">
    <citation type="journal article" date="1999" name="J. Biol. Chem.">
        <title>The action of N-terminal acetyltransferases on yeast ribosomal proteins.</title>
        <authorList>
            <person name="Arnold R.J."/>
            <person name="Polevoda B."/>
            <person name="Reilly J.P."/>
            <person name="Sherman F."/>
        </authorList>
    </citation>
    <scope>CLEAVAGE OF INITIATOR METHIONINE</scope>
    <scope>ACETYLATION AT SER-2 BY NATA</scope>
</reference>
<reference key="8">
    <citation type="journal article" date="2008" name="Mol. Cell. Proteomics">
        <title>A multidimensional chromatography technology for in-depth phosphoproteome analysis.</title>
        <authorList>
            <person name="Albuquerque C.P."/>
            <person name="Smolka M.B."/>
            <person name="Payne S.H."/>
            <person name="Bafna V."/>
            <person name="Eng J."/>
            <person name="Zhou H."/>
        </authorList>
    </citation>
    <scope>PHOSPHORYLATION [LARGE SCALE ANALYSIS] AT THR-27</scope>
    <scope>IDENTIFICATION BY MASS SPECTROMETRY [LARGE SCALE ANALYSIS]</scope>
</reference>
<reference key="9">
    <citation type="journal article" date="2012" name="Proteomics">
        <title>Sites of ubiquitin attachment in Saccharomyces cerevisiae.</title>
        <authorList>
            <person name="Starita L.M."/>
            <person name="Lo R.S."/>
            <person name="Eng J.K."/>
            <person name="von Haller P.D."/>
            <person name="Fields S."/>
        </authorList>
    </citation>
    <scope>UBIQUITINATION [LARGE SCALE ANALYSIS] AT LYS-45 AND LYS-203</scope>
    <scope>IDENTIFICATION BY MASS SPECTROMETRY [LARGE SCALE ANALYSIS]</scope>
</reference>
<reference key="10">
    <citation type="journal article" date="2014" name="Curr. Opin. Struct. Biol.">
        <title>A new system for naming ribosomal proteins.</title>
        <authorList>
            <person name="Ban N."/>
            <person name="Beckmann R."/>
            <person name="Cate J.H.D."/>
            <person name="Dinman J.D."/>
            <person name="Dragon F."/>
            <person name="Ellis S.R."/>
            <person name="Lafontaine D.L.J."/>
            <person name="Lindahl L."/>
            <person name="Liljas A."/>
            <person name="Lipton J.M."/>
            <person name="McAlear M.A."/>
            <person name="Moore P.B."/>
            <person name="Noller H.F."/>
            <person name="Ortega J."/>
            <person name="Panse V.G."/>
            <person name="Ramakrishnan V."/>
            <person name="Spahn C.M.T."/>
            <person name="Steitz T.A."/>
            <person name="Tchorzewski M."/>
            <person name="Tollervey D."/>
            <person name="Warren A.J."/>
            <person name="Williamson J.R."/>
            <person name="Wilson D."/>
            <person name="Yonath A."/>
            <person name="Yusupov M."/>
        </authorList>
    </citation>
    <scope>NOMENCLATURE</scope>
</reference>
<reference key="11">
    <citation type="journal article" date="2001" name="Cell">
        <title>Structure of the 80S ribosome from Saccharomyces cerevisiae -- tRNA-ribosome and subunit-subunit interactions.</title>
        <authorList>
            <person name="Spahn C.M.T."/>
            <person name="Beckmann R."/>
            <person name="Eswar N."/>
            <person name="Penczek P.A."/>
            <person name="Sali A."/>
            <person name="Blobel G."/>
            <person name="Frank J."/>
        </authorList>
    </citation>
    <scope>3D-STRUCTURE MODELING OF 76-225</scope>
    <scope>ELECTRON MICROSCOPY</scope>
</reference>
<reference key="12">
    <citation type="journal article" date="2004" name="EMBO J.">
        <title>Domain movements of elongation factor eEF2 and the eukaryotic 80S ribosome facilitate tRNA translocation.</title>
        <authorList>
            <person name="Spahn C.M.T."/>
            <person name="Gomez-Lorenzo M.G."/>
            <person name="Grassucci R.A."/>
            <person name="Joergensen R."/>
            <person name="Andersen G.R."/>
            <person name="Beckmann R."/>
            <person name="Penczek P.A."/>
            <person name="Ballesta J.P.G."/>
            <person name="Frank J."/>
        </authorList>
    </citation>
    <scope>3D-STRUCTURE MODELING OF 76-225</scope>
    <scope>ELECTRON MICROSCOPY</scope>
</reference>
<reference key="13">
    <citation type="journal article" date="2006" name="Nat. Struct. Mol. Biol.">
        <title>Structure of the ribosome-bound cricket paralysis virus IRES RNA.</title>
        <authorList>
            <person name="Schueler M."/>
            <person name="Connell S.R."/>
            <person name="Lescoute A."/>
            <person name="Giesebrecht J."/>
            <person name="Dabrowski M."/>
            <person name="Schroeer B."/>
            <person name="Mielke T."/>
            <person name="Penczek P.A."/>
            <person name="Westhof E."/>
            <person name="Spahn C.M.T."/>
        </authorList>
    </citation>
    <scope>STRUCTURE BY ELECTRON MICROSCOPY (7.3 ANGSTROMS) OF 76-225</scope>
</reference>
<reference key="14">
    <citation type="journal article" date="2010" name="Science">
        <title>Crystal structure of the eukaryotic ribosome.</title>
        <authorList>
            <person name="Ben-Shem A."/>
            <person name="Jenner L."/>
            <person name="Yusupova G."/>
            <person name="Yusupov M."/>
        </authorList>
    </citation>
    <scope>X-RAY CRYSTALLOGRAPHY (4.00 ANGSTROMS) OF 80S RIBOSOME</scope>
</reference>
<reference key="15">
    <citation type="journal article" date="2011" name="Science">
        <title>The structure of the eukaryotic ribosome at 3.0 A resolution.</title>
        <authorList>
            <person name="Ben-Shem A."/>
            <person name="Garreau de Loubresse N."/>
            <person name="Melnikov S."/>
            <person name="Jenner L."/>
            <person name="Yusupova G."/>
            <person name="Yusupov M."/>
        </authorList>
    </citation>
    <scope>X-RAY CRYSTALLOGRAPHY (3.00 ANGSTROMS) OF 80S RIBOSOME</scope>
    <scope>SUBUNIT</scope>
    <scope>SUBCELLULAR LOCATION</scope>
</reference>
<protein>
    <recommendedName>
        <fullName evidence="4">Small ribosomal subunit protein uS7</fullName>
    </recommendedName>
    <alternativeName>
        <fullName evidence="5">40S ribosomal protein S5</fullName>
    </alternativeName>
    <alternativeName>
        <fullName>RP14</fullName>
    </alternativeName>
    <alternativeName>
        <fullName>S2</fullName>
    </alternativeName>
    <alternativeName>
        <fullName>YS8</fullName>
    </alternativeName>
</protein>
<comment type="function">
    <text evidence="7">Component of the ribosome, a large ribonucleoprotein complex responsible for the synthesis of proteins in the cell. The small ribosomal subunit (SSU) binds messenger RNAs (mRNAs) and translates the encoded message by selecting cognate aminoacyl-transfer RNA (tRNA) molecules. The large subunit (LSU) contains the ribosomal catalytic site termed the peptidyl transferase center (PTC), which catalyzes the formation of peptide bonds, thereby polymerizing the amino acids delivered by tRNAs into a polypeptide chain. The nascent polypeptides leave the ribosome through a tunnel in the LSU and interact with protein factors that function in enzymatic processing, targeting, and the membrane insertion of nascent chains at the exit of the ribosomal tunnel.</text>
</comment>
<comment type="subunit">
    <text evidence="3 8">Component of the small ribosomal subunit (SSU). Mature yeast ribosomes consist of a small (40S) and a large (60S) subunit. The 40S small subunit contains 1 molecule of ribosomal RNA (18S rRNA) and 33 different proteins (encoded by 57 genes). The large 60S subunit contains 3 rRNA molecules (25S, 5.8S and 5S rRNA) and 46 different proteins (encoded by 81 genes) (PubMed:22096102, PubMed:9559554).</text>
</comment>
<comment type="interaction">
    <interactant intactId="EBI-16150">
        <id>P26783</id>
    </interactant>
    <interactant intactId="EBI-3881">
        <id>P48524</id>
        <label>BUL1</label>
    </interactant>
    <organismsDiffer>false</organismsDiffer>
    <experiments>3</experiments>
</comment>
<comment type="subcellular location">
    <subcellularLocation>
        <location evidence="3">Cytoplasm</location>
    </subcellularLocation>
</comment>
<comment type="PTM">
    <text evidence="1 2">N-terminally acetylated by acetyltransferase NatA.</text>
</comment>
<comment type="similarity">
    <text evidence="6">Belongs to the universal ribosomal protein uS7 family.</text>
</comment>
<organism>
    <name type="scientific">Saccharomyces cerevisiae (strain ATCC 204508 / S288c)</name>
    <name type="common">Baker's yeast</name>
    <dbReference type="NCBI Taxonomy" id="559292"/>
    <lineage>
        <taxon>Eukaryota</taxon>
        <taxon>Fungi</taxon>
        <taxon>Dikarya</taxon>
        <taxon>Ascomycota</taxon>
        <taxon>Saccharomycotina</taxon>
        <taxon>Saccharomycetes</taxon>
        <taxon>Saccharomycetales</taxon>
        <taxon>Saccharomycetaceae</taxon>
        <taxon>Saccharomyces</taxon>
    </lineage>
</organism>
<sequence length="225" mass="25039">MSDTEAPVEVQEDFEVVEEFTPVVLATPIPEEVQQAQTEIKLFNKWSFEEVEVKDASLVDYVQVRQPIFVAHTAGRYANKRFRKAQCPIIERLTNSLMMNGRNNGKKLKAVRIIKHTLDIINVLTDQNPIQVVVDAITNTGPREDTTRVGGGGAARRQAVDVSPLRRVNQAIALLTIGAREAAFRNIKTIAETLAEELINAAKGSSTSYAIKKKDELERVAKSNR</sequence>
<dbReference type="EMBL" id="X89368">
    <property type="protein sequence ID" value="CAA61550.1"/>
    <property type="molecule type" value="Genomic_DNA"/>
</dbReference>
<dbReference type="EMBL" id="Z49623">
    <property type="protein sequence ID" value="CAA89654.1"/>
    <property type="molecule type" value="Genomic_DNA"/>
</dbReference>
<dbReference type="EMBL" id="AY692868">
    <property type="protein sequence ID" value="AAT92887.1"/>
    <property type="molecule type" value="Genomic_DNA"/>
</dbReference>
<dbReference type="EMBL" id="BK006943">
    <property type="protein sequence ID" value="DAA08908.1"/>
    <property type="molecule type" value="Genomic_DNA"/>
</dbReference>
<dbReference type="PIR" id="S55720">
    <property type="entry name" value="S55720"/>
</dbReference>
<dbReference type="RefSeq" id="NP_012657.1">
    <property type="nucleotide sequence ID" value="NM_001181781.1"/>
</dbReference>
<dbReference type="PDB" id="2NOQ">
    <property type="method" value="EM"/>
    <property type="resolution" value="7.30 A"/>
    <property type="chains" value="F=76-225"/>
</dbReference>
<dbReference type="PDB" id="3J6X">
    <property type="method" value="EM"/>
    <property type="resolution" value="6.10 A"/>
    <property type="chains" value="S5=1-225"/>
</dbReference>
<dbReference type="PDB" id="3J6Y">
    <property type="method" value="EM"/>
    <property type="resolution" value="6.10 A"/>
    <property type="chains" value="S5=1-225"/>
</dbReference>
<dbReference type="PDB" id="3J77">
    <property type="method" value="EM"/>
    <property type="resolution" value="6.20 A"/>
    <property type="chains" value="S5=1-225"/>
</dbReference>
<dbReference type="PDB" id="3J78">
    <property type="method" value="EM"/>
    <property type="resolution" value="6.30 A"/>
    <property type="chains" value="S5=1-225"/>
</dbReference>
<dbReference type="PDB" id="4U3M">
    <property type="method" value="X-ray"/>
    <property type="resolution" value="3.00 A"/>
    <property type="chains" value="S5/s5=2-225"/>
</dbReference>
<dbReference type="PDB" id="4U3N">
    <property type="method" value="X-ray"/>
    <property type="resolution" value="3.20 A"/>
    <property type="chains" value="S5/s5=2-225"/>
</dbReference>
<dbReference type="PDB" id="4U3U">
    <property type="method" value="X-ray"/>
    <property type="resolution" value="2.90 A"/>
    <property type="chains" value="S5/s5=2-225"/>
</dbReference>
<dbReference type="PDB" id="4U4N">
    <property type="method" value="X-ray"/>
    <property type="resolution" value="3.10 A"/>
    <property type="chains" value="S5/s5=2-225"/>
</dbReference>
<dbReference type="PDB" id="4U4O">
    <property type="method" value="X-ray"/>
    <property type="resolution" value="3.60 A"/>
    <property type="chains" value="S5/s5=2-225"/>
</dbReference>
<dbReference type="PDB" id="4U4Q">
    <property type="method" value="X-ray"/>
    <property type="resolution" value="3.00 A"/>
    <property type="chains" value="S5/s5=2-225"/>
</dbReference>
<dbReference type="PDB" id="4U4R">
    <property type="method" value="X-ray"/>
    <property type="resolution" value="2.80 A"/>
    <property type="chains" value="S5/s5=2-225"/>
</dbReference>
<dbReference type="PDB" id="4U4U">
    <property type="method" value="X-ray"/>
    <property type="resolution" value="3.00 A"/>
    <property type="chains" value="S5/s5=2-225"/>
</dbReference>
<dbReference type="PDB" id="4U4Y">
    <property type="method" value="X-ray"/>
    <property type="resolution" value="3.20 A"/>
    <property type="chains" value="S5/s5=2-225"/>
</dbReference>
<dbReference type="PDB" id="4U4Z">
    <property type="method" value="X-ray"/>
    <property type="resolution" value="3.10 A"/>
    <property type="chains" value="S5/s5=2-225"/>
</dbReference>
<dbReference type="PDB" id="4U50">
    <property type="method" value="X-ray"/>
    <property type="resolution" value="3.20 A"/>
    <property type="chains" value="S5/s5=2-225"/>
</dbReference>
<dbReference type="PDB" id="4U51">
    <property type="method" value="X-ray"/>
    <property type="resolution" value="3.20 A"/>
    <property type="chains" value="S5/s5=2-225"/>
</dbReference>
<dbReference type="PDB" id="4U52">
    <property type="method" value="X-ray"/>
    <property type="resolution" value="3.00 A"/>
    <property type="chains" value="S5/s5=2-225"/>
</dbReference>
<dbReference type="PDB" id="4U53">
    <property type="method" value="X-ray"/>
    <property type="resolution" value="3.30 A"/>
    <property type="chains" value="S5/s5=2-225"/>
</dbReference>
<dbReference type="PDB" id="4U55">
    <property type="method" value="X-ray"/>
    <property type="resolution" value="3.20 A"/>
    <property type="chains" value="S5/s5=2-225"/>
</dbReference>
<dbReference type="PDB" id="4U56">
    <property type="method" value="X-ray"/>
    <property type="resolution" value="3.45 A"/>
    <property type="chains" value="S5/s5=2-225"/>
</dbReference>
<dbReference type="PDB" id="4U6F">
    <property type="method" value="X-ray"/>
    <property type="resolution" value="3.10 A"/>
    <property type="chains" value="S5/s5=2-225"/>
</dbReference>
<dbReference type="PDB" id="4V4B">
    <property type="method" value="EM"/>
    <property type="resolution" value="11.70 A"/>
    <property type="chains" value="AG=76-225"/>
</dbReference>
<dbReference type="PDB" id="4V5Z">
    <property type="method" value="EM"/>
    <property type="resolution" value="8.70 A"/>
    <property type="chains" value="Ag=36-225"/>
</dbReference>
<dbReference type="PDB" id="4V6I">
    <property type="method" value="EM"/>
    <property type="resolution" value="8.80 A"/>
    <property type="chains" value="AF=1-225"/>
</dbReference>
<dbReference type="PDB" id="4V7R">
    <property type="method" value="X-ray"/>
    <property type="resolution" value="4.00 A"/>
    <property type="chains" value="AD/CD=1-225"/>
</dbReference>
<dbReference type="PDB" id="4V88">
    <property type="method" value="X-ray"/>
    <property type="resolution" value="3.00 A"/>
    <property type="chains" value="AF/CF=1-225"/>
</dbReference>
<dbReference type="PDB" id="4V8Y">
    <property type="method" value="EM"/>
    <property type="resolution" value="4.30 A"/>
    <property type="chains" value="AF=1-225"/>
</dbReference>
<dbReference type="PDB" id="4V8Z">
    <property type="method" value="EM"/>
    <property type="resolution" value="6.60 A"/>
    <property type="chains" value="AF=1-225"/>
</dbReference>
<dbReference type="PDB" id="4V92">
    <property type="method" value="EM"/>
    <property type="resolution" value="3.70 A"/>
    <property type="chains" value="F=20-225"/>
</dbReference>
<dbReference type="PDB" id="5DAT">
    <property type="method" value="X-ray"/>
    <property type="resolution" value="3.15 A"/>
    <property type="chains" value="S5/s5=2-225"/>
</dbReference>
<dbReference type="PDB" id="5DC3">
    <property type="method" value="X-ray"/>
    <property type="resolution" value="3.25 A"/>
    <property type="chains" value="S5/s5=2-225"/>
</dbReference>
<dbReference type="PDB" id="5DGE">
    <property type="method" value="X-ray"/>
    <property type="resolution" value="3.45 A"/>
    <property type="chains" value="S5/s5=2-225"/>
</dbReference>
<dbReference type="PDB" id="5DGF">
    <property type="method" value="X-ray"/>
    <property type="resolution" value="3.30 A"/>
    <property type="chains" value="S5/s5=2-225"/>
</dbReference>
<dbReference type="PDB" id="5DGV">
    <property type="method" value="X-ray"/>
    <property type="resolution" value="3.10 A"/>
    <property type="chains" value="S5/s5=2-225"/>
</dbReference>
<dbReference type="PDB" id="5FCI">
    <property type="method" value="X-ray"/>
    <property type="resolution" value="3.40 A"/>
    <property type="chains" value="S5/s5=2-225"/>
</dbReference>
<dbReference type="PDB" id="5FCJ">
    <property type="method" value="X-ray"/>
    <property type="resolution" value="3.10 A"/>
    <property type="chains" value="S5/s5=2-225"/>
</dbReference>
<dbReference type="PDB" id="5I4L">
    <property type="method" value="X-ray"/>
    <property type="resolution" value="3.10 A"/>
    <property type="chains" value="S5/s5=20-225"/>
</dbReference>
<dbReference type="PDB" id="5JPQ">
    <property type="method" value="EM"/>
    <property type="resolution" value="7.30 A"/>
    <property type="chains" value="q=1-225"/>
</dbReference>
<dbReference type="PDB" id="5JUO">
    <property type="method" value="EM"/>
    <property type="resolution" value="4.00 A"/>
    <property type="chains" value="CB=1-225"/>
</dbReference>
<dbReference type="PDB" id="5JUP">
    <property type="method" value="EM"/>
    <property type="resolution" value="3.50 A"/>
    <property type="chains" value="CB=1-225"/>
</dbReference>
<dbReference type="PDB" id="5JUS">
    <property type="method" value="EM"/>
    <property type="resolution" value="4.20 A"/>
    <property type="chains" value="CB=1-225"/>
</dbReference>
<dbReference type="PDB" id="5JUT">
    <property type="method" value="EM"/>
    <property type="resolution" value="4.00 A"/>
    <property type="chains" value="CB=1-225"/>
</dbReference>
<dbReference type="PDB" id="5JUU">
    <property type="method" value="EM"/>
    <property type="resolution" value="4.00 A"/>
    <property type="chains" value="CB=1-225"/>
</dbReference>
<dbReference type="PDB" id="5LYB">
    <property type="method" value="X-ray"/>
    <property type="resolution" value="3.25 A"/>
    <property type="chains" value="S5/s5=20-225"/>
</dbReference>
<dbReference type="PDB" id="5M1J">
    <property type="method" value="EM"/>
    <property type="resolution" value="3.30 A"/>
    <property type="chains" value="F2=20-225"/>
</dbReference>
<dbReference type="PDB" id="5MC6">
    <property type="method" value="EM"/>
    <property type="resolution" value="3.80 A"/>
    <property type="chains" value="B=1-225"/>
</dbReference>
<dbReference type="PDB" id="5MEI">
    <property type="method" value="X-ray"/>
    <property type="resolution" value="3.50 A"/>
    <property type="chains" value="G/s5=20-225"/>
</dbReference>
<dbReference type="PDB" id="5NDG">
    <property type="method" value="X-ray"/>
    <property type="resolution" value="3.70 A"/>
    <property type="chains" value="S5/s5=20-225"/>
</dbReference>
<dbReference type="PDB" id="5NDV">
    <property type="method" value="X-ray"/>
    <property type="resolution" value="3.30 A"/>
    <property type="chains" value="S5/s5=20-225"/>
</dbReference>
<dbReference type="PDB" id="5NDW">
    <property type="method" value="X-ray"/>
    <property type="resolution" value="3.70 A"/>
    <property type="chains" value="S5/s5=20-225"/>
</dbReference>
<dbReference type="PDB" id="5OBM">
    <property type="method" value="X-ray"/>
    <property type="resolution" value="3.40 A"/>
    <property type="chains" value="S5/s5=20-225"/>
</dbReference>
<dbReference type="PDB" id="5ON6">
    <property type="method" value="X-ray"/>
    <property type="resolution" value="3.10 A"/>
    <property type="chains" value="G/s5=20-225"/>
</dbReference>
<dbReference type="PDB" id="5TBW">
    <property type="method" value="X-ray"/>
    <property type="resolution" value="3.00 A"/>
    <property type="chains" value="G/s5=20-225"/>
</dbReference>
<dbReference type="PDB" id="5TGA">
    <property type="method" value="X-ray"/>
    <property type="resolution" value="3.30 A"/>
    <property type="chains" value="S5/s5=20-225"/>
</dbReference>
<dbReference type="PDB" id="5TGM">
    <property type="method" value="X-ray"/>
    <property type="resolution" value="3.50 A"/>
    <property type="chains" value="S5/s5=20-225"/>
</dbReference>
<dbReference type="PDB" id="5TZS">
    <property type="method" value="EM"/>
    <property type="resolution" value="5.10 A"/>
    <property type="chains" value="6=1-225"/>
</dbReference>
<dbReference type="PDB" id="5WYJ">
    <property type="method" value="EM"/>
    <property type="resolution" value="8.70 A"/>
    <property type="chains" value="SG=1-225"/>
</dbReference>
<dbReference type="PDB" id="5WYK">
    <property type="method" value="EM"/>
    <property type="resolution" value="4.50 A"/>
    <property type="chains" value="SG=1-225"/>
</dbReference>
<dbReference type="PDB" id="6EML">
    <property type="method" value="EM"/>
    <property type="resolution" value="3.60 A"/>
    <property type="chains" value="B=1-225"/>
</dbReference>
<dbReference type="PDB" id="6FAI">
    <property type="method" value="EM"/>
    <property type="resolution" value="3.40 A"/>
    <property type="chains" value="F=1-225"/>
</dbReference>
<dbReference type="PDB" id="6GQ1">
    <property type="method" value="EM"/>
    <property type="resolution" value="4.40 A"/>
    <property type="chains" value="v=20-225"/>
</dbReference>
<dbReference type="PDB" id="6GQB">
    <property type="method" value="EM"/>
    <property type="resolution" value="3.90 A"/>
    <property type="chains" value="v=20-225"/>
</dbReference>
<dbReference type="PDB" id="6GQV">
    <property type="method" value="EM"/>
    <property type="resolution" value="4.00 A"/>
    <property type="chains" value="v=20-225"/>
</dbReference>
<dbReference type="PDB" id="6HHQ">
    <property type="method" value="X-ray"/>
    <property type="resolution" value="3.10 A"/>
    <property type="chains" value="G/s5=1-225"/>
</dbReference>
<dbReference type="PDB" id="6I7O">
    <property type="method" value="EM"/>
    <property type="resolution" value="5.30 A"/>
    <property type="chains" value="B/Bb=20-225"/>
</dbReference>
<dbReference type="PDB" id="6KE6">
    <property type="method" value="EM"/>
    <property type="resolution" value="3.40 A"/>
    <property type="chains" value="SG=1-225"/>
</dbReference>
<dbReference type="PDB" id="6LQP">
    <property type="method" value="EM"/>
    <property type="resolution" value="3.20 A"/>
    <property type="chains" value="SG=1-225"/>
</dbReference>
<dbReference type="PDB" id="6LQQ">
    <property type="method" value="EM"/>
    <property type="resolution" value="4.10 A"/>
    <property type="chains" value="SG=1-225"/>
</dbReference>
<dbReference type="PDB" id="6LQR">
    <property type="method" value="EM"/>
    <property type="resolution" value="8.60 A"/>
    <property type="chains" value="SG=1-225"/>
</dbReference>
<dbReference type="PDB" id="6LQS">
    <property type="method" value="EM"/>
    <property type="resolution" value="3.80 A"/>
    <property type="chains" value="SG=1-225"/>
</dbReference>
<dbReference type="PDB" id="6LQT">
    <property type="method" value="EM"/>
    <property type="resolution" value="4.90 A"/>
    <property type="chains" value="SG=1-225"/>
</dbReference>
<dbReference type="PDB" id="6LQU">
    <property type="method" value="EM"/>
    <property type="resolution" value="3.70 A"/>
    <property type="chains" value="SG=1-225"/>
</dbReference>
<dbReference type="PDB" id="6LQV">
    <property type="method" value="EM"/>
    <property type="resolution" value="4.80 A"/>
    <property type="chains" value="SG=1-225"/>
</dbReference>
<dbReference type="PDB" id="6RBD">
    <property type="method" value="EM"/>
    <property type="resolution" value="3.47 A"/>
    <property type="chains" value="F=1-225"/>
</dbReference>
<dbReference type="PDB" id="6RBE">
    <property type="method" value="EM"/>
    <property type="resolution" value="3.80 A"/>
    <property type="chains" value="F=1-225"/>
</dbReference>
<dbReference type="PDB" id="6SNT">
    <property type="method" value="EM"/>
    <property type="resolution" value="2.80 A"/>
    <property type="chains" value="F=1-225"/>
</dbReference>
<dbReference type="PDB" id="6T7T">
    <property type="method" value="EM"/>
    <property type="resolution" value="3.10 A"/>
    <property type="chains" value="SF=20-225"/>
</dbReference>
<dbReference type="PDB" id="6TNU">
    <property type="method" value="EM"/>
    <property type="resolution" value="3.10 A"/>
    <property type="chains" value="B=20-225"/>
</dbReference>
<dbReference type="PDB" id="6WDR">
    <property type="method" value="EM"/>
    <property type="resolution" value="3.70 A"/>
    <property type="chains" value="F=20-225"/>
</dbReference>
<dbReference type="PDB" id="6Y7C">
    <property type="method" value="EM"/>
    <property type="resolution" value="3.80 A"/>
    <property type="chains" value="F=1-225"/>
</dbReference>
<dbReference type="PDB" id="6Z6J">
    <property type="method" value="EM"/>
    <property type="resolution" value="3.40 A"/>
    <property type="chains" value="SF=1-225"/>
</dbReference>
<dbReference type="PDB" id="6ZCE">
    <property type="method" value="EM"/>
    <property type="resolution" value="5.30 A"/>
    <property type="chains" value="G=1-225"/>
</dbReference>
<dbReference type="PDB" id="6ZQA">
    <property type="method" value="EM"/>
    <property type="resolution" value="4.40 A"/>
    <property type="chains" value="DF=1-225"/>
</dbReference>
<dbReference type="PDB" id="6ZQB">
    <property type="method" value="EM"/>
    <property type="resolution" value="3.90 A"/>
    <property type="chains" value="DF=1-225"/>
</dbReference>
<dbReference type="PDB" id="6ZQC">
    <property type="method" value="EM"/>
    <property type="resolution" value="3.80 A"/>
    <property type="chains" value="DF=1-225"/>
</dbReference>
<dbReference type="PDB" id="6ZQE">
    <property type="method" value="EM"/>
    <property type="resolution" value="7.10 A"/>
    <property type="chains" value="DF=1-225"/>
</dbReference>
<dbReference type="PDB" id="6ZQF">
    <property type="method" value="EM"/>
    <property type="resolution" value="4.90 A"/>
    <property type="chains" value="DF=1-225"/>
</dbReference>
<dbReference type="PDB" id="6ZQG">
    <property type="method" value="EM"/>
    <property type="resolution" value="3.50 A"/>
    <property type="chains" value="DF=1-225"/>
</dbReference>
<dbReference type="PDB" id="6ZU9">
    <property type="method" value="EM"/>
    <property type="resolution" value="6.20 A"/>
    <property type="chains" value="C=1-225"/>
</dbReference>
<dbReference type="PDB" id="6ZVI">
    <property type="method" value="EM"/>
    <property type="resolution" value="3.00 A"/>
    <property type="chains" value="n=20-225"/>
</dbReference>
<dbReference type="PDB" id="7A1G">
    <property type="method" value="EM"/>
    <property type="resolution" value="3.00 A"/>
    <property type="chains" value="B=20-225"/>
</dbReference>
<dbReference type="PDB" id="7AJT">
    <property type="method" value="EM"/>
    <property type="resolution" value="4.60 A"/>
    <property type="chains" value="DF=1-225"/>
</dbReference>
<dbReference type="PDB" id="7AJU">
    <property type="method" value="EM"/>
    <property type="resolution" value="3.80 A"/>
    <property type="chains" value="DF=1-225"/>
</dbReference>
<dbReference type="PDB" id="7B7D">
    <property type="method" value="EM"/>
    <property type="resolution" value="3.30 A"/>
    <property type="chains" value="B=20-225"/>
</dbReference>
<dbReference type="PDB" id="7D4I">
    <property type="method" value="EM"/>
    <property type="resolution" value="4.00 A"/>
    <property type="chains" value="SG=1-225"/>
</dbReference>
<dbReference type="PDB" id="7D5S">
    <property type="method" value="EM"/>
    <property type="resolution" value="4.60 A"/>
    <property type="chains" value="SG=1-225"/>
</dbReference>
<dbReference type="PDB" id="7D5T">
    <property type="method" value="EM"/>
    <property type="resolution" value="6.00 A"/>
    <property type="chains" value="SG=1-225"/>
</dbReference>
<dbReference type="PDB" id="7D63">
    <property type="method" value="EM"/>
    <property type="resolution" value="12.30 A"/>
    <property type="chains" value="SG=1-225"/>
</dbReference>
<dbReference type="PDB" id="7MPI">
    <property type="method" value="EM"/>
    <property type="resolution" value="3.05 A"/>
    <property type="chains" value="BF=20-225"/>
</dbReference>
<dbReference type="PDB" id="7MPJ">
    <property type="method" value="EM"/>
    <property type="resolution" value="2.70 A"/>
    <property type="chains" value="BF=20-225"/>
</dbReference>
<dbReference type="PDB" id="7N8B">
    <property type="method" value="EM"/>
    <property type="resolution" value="3.05 A"/>
    <property type="chains" value="BF=20-225"/>
</dbReference>
<dbReference type="PDB" id="7NRC">
    <property type="method" value="EM"/>
    <property type="resolution" value="3.90 A"/>
    <property type="chains" value="SB=20-225"/>
</dbReference>
<dbReference type="PDB" id="7NRD">
    <property type="method" value="EM"/>
    <property type="resolution" value="4.36 A"/>
    <property type="chains" value="SB=20-225"/>
</dbReference>
<dbReference type="PDB" id="7SUK">
    <property type="method" value="EM"/>
    <property type="resolution" value="3.99 A"/>
    <property type="chains" value="L5=13-225"/>
</dbReference>
<dbReference type="PDB" id="7ZPQ">
    <property type="method" value="EM"/>
    <property type="resolution" value="3.47 A"/>
    <property type="chains" value="AF=20-225"/>
</dbReference>
<dbReference type="PDB" id="7ZRS">
    <property type="method" value="EM"/>
    <property type="resolution" value="4.80 A"/>
    <property type="chains" value="AF=20-225"/>
</dbReference>
<dbReference type="PDB" id="7ZUW">
    <property type="method" value="EM"/>
    <property type="resolution" value="4.30 A"/>
    <property type="chains" value="AF=20-225"/>
</dbReference>
<dbReference type="PDB" id="7ZUX">
    <property type="method" value="EM"/>
    <property type="resolution" value="2.50 A"/>
    <property type="chains" value="DF=20-225"/>
</dbReference>
<dbReference type="PDB" id="7ZW0">
    <property type="method" value="EM"/>
    <property type="resolution" value="2.40 A"/>
    <property type="chains" value="sB=1-225"/>
</dbReference>
<dbReference type="PDB" id="8BN3">
    <property type="method" value="EM"/>
    <property type="resolution" value="2.40 A"/>
    <property type="chains" value="S5=20-225"/>
</dbReference>
<dbReference type="PDB" id="8BQD">
    <property type="method" value="EM"/>
    <property type="resolution" value="3.90 A"/>
    <property type="chains" value="B=20-225"/>
</dbReference>
<dbReference type="PDB" id="8BQX">
    <property type="method" value="EM"/>
    <property type="resolution" value="3.80 A"/>
    <property type="chains" value="B=20-225"/>
</dbReference>
<dbReference type="PDB" id="8C00">
    <property type="method" value="EM"/>
    <property type="resolution" value="2.90 A"/>
    <property type="chains" value="B=1-225"/>
</dbReference>
<dbReference type="PDB" id="8C01">
    <property type="method" value="EM"/>
    <property type="resolution" value="2.70 A"/>
    <property type="chains" value="B=1-225"/>
</dbReference>
<dbReference type="PDB" id="8CAH">
    <property type="method" value="EM"/>
    <property type="resolution" value="3.00 A"/>
    <property type="chains" value="B=1-225"/>
</dbReference>
<dbReference type="PDB" id="8CAS">
    <property type="method" value="EM"/>
    <property type="resolution" value="3.30 A"/>
    <property type="chains" value="C=1-225"/>
</dbReference>
<dbReference type="PDB" id="8CBJ">
    <property type="method" value="EM"/>
    <property type="resolution" value="3.80 A"/>
    <property type="chains" value="F=1-225"/>
</dbReference>
<dbReference type="PDB" id="8CCS">
    <property type="method" value="EM"/>
    <property type="resolution" value="1.97 A"/>
    <property type="chains" value="i=1-225"/>
</dbReference>
<dbReference type="PDB" id="8CDL">
    <property type="method" value="EM"/>
    <property type="resolution" value="2.72 A"/>
    <property type="chains" value="i=1-225"/>
</dbReference>
<dbReference type="PDB" id="8CDR">
    <property type="method" value="EM"/>
    <property type="resolution" value="2.04 A"/>
    <property type="chains" value="i=1-225"/>
</dbReference>
<dbReference type="PDB" id="8CEH">
    <property type="method" value="EM"/>
    <property type="resolution" value="2.05 A"/>
    <property type="chains" value="i=1-225"/>
</dbReference>
<dbReference type="PDB" id="8CF5">
    <property type="method" value="EM"/>
    <property type="resolution" value="2.71 A"/>
    <property type="chains" value="i=1-225"/>
</dbReference>
<dbReference type="PDB" id="8CG8">
    <property type="method" value="EM"/>
    <property type="resolution" value="2.57 A"/>
    <property type="chains" value="i=1-225"/>
</dbReference>
<dbReference type="PDB" id="8CGN">
    <property type="method" value="EM"/>
    <property type="resolution" value="2.28 A"/>
    <property type="chains" value="i=1-225"/>
</dbReference>
<dbReference type="PDB" id="8CIV">
    <property type="method" value="EM"/>
    <property type="resolution" value="2.47 A"/>
    <property type="chains" value="i=1-225"/>
</dbReference>
<dbReference type="PDB" id="8CKU">
    <property type="method" value="EM"/>
    <property type="resolution" value="3.11 A"/>
    <property type="chains" value="i=1-225"/>
</dbReference>
<dbReference type="PDB" id="8CMJ">
    <property type="method" value="EM"/>
    <property type="resolution" value="3.79 A"/>
    <property type="chains" value="i=1-225"/>
</dbReference>
<dbReference type="PDB" id="8K2D">
    <property type="method" value="EM"/>
    <property type="resolution" value="3.20 A"/>
    <property type="chains" value="SF=1-225"/>
</dbReference>
<dbReference type="PDB" id="8K82">
    <property type="method" value="EM"/>
    <property type="resolution" value="3.00 A"/>
    <property type="chains" value="SF=1-225"/>
</dbReference>
<dbReference type="PDB" id="8P4V">
    <property type="method" value="X-ray"/>
    <property type="resolution" value="3.16 A"/>
    <property type="chains" value="G/s5=1-225"/>
</dbReference>
<dbReference type="PDB" id="8P9A">
    <property type="method" value="X-ray"/>
    <property type="resolution" value="2.90 A"/>
    <property type="chains" value="G/s5=1-225"/>
</dbReference>
<dbReference type="PDB" id="8UT0">
    <property type="method" value="EM"/>
    <property type="resolution" value="3.22 A"/>
    <property type="chains" value="SB=20-225"/>
</dbReference>
<dbReference type="PDB" id="8UTI">
    <property type="method" value="EM"/>
    <property type="resolution" value="3.13 A"/>
    <property type="chains" value="SB=20-225"/>
</dbReference>
<dbReference type="PDB" id="8XU8">
    <property type="method" value="EM"/>
    <property type="resolution" value="3.40 A"/>
    <property type="chains" value="SB=20-225"/>
</dbReference>
<dbReference type="PDB" id="8YLD">
    <property type="method" value="EM"/>
    <property type="resolution" value="3.90 A"/>
    <property type="chains" value="SB=20-225"/>
</dbReference>
<dbReference type="PDB" id="8YLR">
    <property type="method" value="EM"/>
    <property type="resolution" value="3.90 A"/>
    <property type="chains" value="SB=20-225"/>
</dbReference>
<dbReference type="PDB" id="8Z70">
    <property type="method" value="EM"/>
    <property type="resolution" value="3.20 A"/>
    <property type="chains" value="SB=20-225"/>
</dbReference>
<dbReference type="PDB" id="8Z71">
    <property type="method" value="EM"/>
    <property type="resolution" value="3.60 A"/>
    <property type="chains" value="SB=20-225"/>
</dbReference>
<dbReference type="PDB" id="9F9S">
    <property type="method" value="EM"/>
    <property type="resolution" value="2.90 A"/>
    <property type="chains" value="Rf/Sf=1-225"/>
</dbReference>
<dbReference type="PDBsum" id="2NOQ"/>
<dbReference type="PDBsum" id="3J6X"/>
<dbReference type="PDBsum" id="3J6Y"/>
<dbReference type="PDBsum" id="3J77"/>
<dbReference type="PDBsum" id="3J78"/>
<dbReference type="PDBsum" id="4U3M"/>
<dbReference type="PDBsum" id="4U3N"/>
<dbReference type="PDBsum" id="4U3U"/>
<dbReference type="PDBsum" id="4U4N"/>
<dbReference type="PDBsum" id="4U4O"/>
<dbReference type="PDBsum" id="4U4Q"/>
<dbReference type="PDBsum" id="4U4R"/>
<dbReference type="PDBsum" id="4U4U"/>
<dbReference type="PDBsum" id="4U4Y"/>
<dbReference type="PDBsum" id="4U4Z"/>
<dbReference type="PDBsum" id="4U50"/>
<dbReference type="PDBsum" id="4U51"/>
<dbReference type="PDBsum" id="4U52"/>
<dbReference type="PDBsum" id="4U53"/>
<dbReference type="PDBsum" id="4U55"/>
<dbReference type="PDBsum" id="4U56"/>
<dbReference type="PDBsum" id="4U6F"/>
<dbReference type="PDBsum" id="4V4B"/>
<dbReference type="PDBsum" id="4V5Z"/>
<dbReference type="PDBsum" id="4V6I"/>
<dbReference type="PDBsum" id="4V7R"/>
<dbReference type="PDBsum" id="4V88"/>
<dbReference type="PDBsum" id="4V8Y"/>
<dbReference type="PDBsum" id="4V8Z"/>
<dbReference type="PDBsum" id="4V92"/>
<dbReference type="PDBsum" id="5DAT"/>
<dbReference type="PDBsum" id="5DC3"/>
<dbReference type="PDBsum" id="5DGE"/>
<dbReference type="PDBsum" id="5DGF"/>
<dbReference type="PDBsum" id="5DGV"/>
<dbReference type="PDBsum" id="5FCI"/>
<dbReference type="PDBsum" id="5FCJ"/>
<dbReference type="PDBsum" id="5I4L"/>
<dbReference type="PDBsum" id="5JPQ"/>
<dbReference type="PDBsum" id="5JUO"/>
<dbReference type="PDBsum" id="5JUP"/>
<dbReference type="PDBsum" id="5JUS"/>
<dbReference type="PDBsum" id="5JUT"/>
<dbReference type="PDBsum" id="5JUU"/>
<dbReference type="PDBsum" id="5LYB"/>
<dbReference type="PDBsum" id="5M1J"/>
<dbReference type="PDBsum" id="5MC6"/>
<dbReference type="PDBsum" id="5MEI"/>
<dbReference type="PDBsum" id="5NDG"/>
<dbReference type="PDBsum" id="5NDV"/>
<dbReference type="PDBsum" id="5NDW"/>
<dbReference type="PDBsum" id="5OBM"/>
<dbReference type="PDBsum" id="5ON6"/>
<dbReference type="PDBsum" id="5TBW"/>
<dbReference type="PDBsum" id="5TGA"/>
<dbReference type="PDBsum" id="5TGM"/>
<dbReference type="PDBsum" id="5TZS"/>
<dbReference type="PDBsum" id="5WYJ"/>
<dbReference type="PDBsum" id="5WYK"/>
<dbReference type="PDBsum" id="6EML"/>
<dbReference type="PDBsum" id="6FAI"/>
<dbReference type="PDBsum" id="6GQ1"/>
<dbReference type="PDBsum" id="6GQB"/>
<dbReference type="PDBsum" id="6GQV"/>
<dbReference type="PDBsum" id="6HHQ"/>
<dbReference type="PDBsum" id="6I7O"/>
<dbReference type="PDBsum" id="6KE6"/>
<dbReference type="PDBsum" id="6LQP"/>
<dbReference type="PDBsum" id="6LQQ"/>
<dbReference type="PDBsum" id="6LQR"/>
<dbReference type="PDBsum" id="6LQS"/>
<dbReference type="PDBsum" id="6LQT"/>
<dbReference type="PDBsum" id="6LQU"/>
<dbReference type="PDBsum" id="6LQV"/>
<dbReference type="PDBsum" id="6RBD"/>
<dbReference type="PDBsum" id="6RBE"/>
<dbReference type="PDBsum" id="6SNT"/>
<dbReference type="PDBsum" id="6T7T"/>
<dbReference type="PDBsum" id="6TNU"/>
<dbReference type="PDBsum" id="6WDR"/>
<dbReference type="PDBsum" id="6Y7C"/>
<dbReference type="PDBsum" id="6Z6J"/>
<dbReference type="PDBsum" id="6ZCE"/>
<dbReference type="PDBsum" id="6ZQA"/>
<dbReference type="PDBsum" id="6ZQB"/>
<dbReference type="PDBsum" id="6ZQC"/>
<dbReference type="PDBsum" id="6ZQE"/>
<dbReference type="PDBsum" id="6ZQF"/>
<dbReference type="PDBsum" id="6ZQG"/>
<dbReference type="PDBsum" id="6ZU9"/>
<dbReference type="PDBsum" id="6ZVI"/>
<dbReference type="PDBsum" id="7A1G"/>
<dbReference type="PDBsum" id="7AJT"/>
<dbReference type="PDBsum" id="7AJU"/>
<dbReference type="PDBsum" id="7B7D"/>
<dbReference type="PDBsum" id="7D4I"/>
<dbReference type="PDBsum" id="7D5S"/>
<dbReference type="PDBsum" id="7D5T"/>
<dbReference type="PDBsum" id="7D63"/>
<dbReference type="PDBsum" id="7MPI"/>
<dbReference type="PDBsum" id="7MPJ"/>
<dbReference type="PDBsum" id="7N8B"/>
<dbReference type="PDBsum" id="7NRC"/>
<dbReference type="PDBsum" id="7NRD"/>
<dbReference type="PDBsum" id="7SUK"/>
<dbReference type="PDBsum" id="7ZPQ"/>
<dbReference type="PDBsum" id="7ZRS"/>
<dbReference type="PDBsum" id="7ZUW"/>
<dbReference type="PDBsum" id="7ZUX"/>
<dbReference type="PDBsum" id="7ZW0"/>
<dbReference type="PDBsum" id="8BN3"/>
<dbReference type="PDBsum" id="8BQD"/>
<dbReference type="PDBsum" id="8BQX"/>
<dbReference type="PDBsum" id="8C00"/>
<dbReference type="PDBsum" id="8C01"/>
<dbReference type="PDBsum" id="8CAH"/>
<dbReference type="PDBsum" id="8CAS"/>
<dbReference type="PDBsum" id="8CBJ"/>
<dbReference type="PDBsum" id="8CCS"/>
<dbReference type="PDBsum" id="8CDL"/>
<dbReference type="PDBsum" id="8CDR"/>
<dbReference type="PDBsum" id="8CEH"/>
<dbReference type="PDBsum" id="8CF5"/>
<dbReference type="PDBsum" id="8CG8"/>
<dbReference type="PDBsum" id="8CGN"/>
<dbReference type="PDBsum" id="8CIV"/>
<dbReference type="PDBsum" id="8CKU"/>
<dbReference type="PDBsum" id="8CMJ"/>
<dbReference type="PDBsum" id="8K2D"/>
<dbReference type="PDBsum" id="8K82"/>
<dbReference type="PDBsum" id="8P4V"/>
<dbReference type="PDBsum" id="8P9A"/>
<dbReference type="PDBsum" id="8UT0"/>
<dbReference type="PDBsum" id="8UTI"/>
<dbReference type="PDBsum" id="8XU8"/>
<dbReference type="PDBsum" id="8YLD"/>
<dbReference type="PDBsum" id="8YLR"/>
<dbReference type="PDBsum" id="8Z70"/>
<dbReference type="PDBsum" id="8Z71"/>
<dbReference type="PDBsum" id="9F9S"/>
<dbReference type="EMDB" id="EMD-0047"/>
<dbReference type="EMDB" id="EMD-0048"/>
<dbReference type="EMDB" id="EMD-0049"/>
<dbReference type="EMDB" id="EMD-0949"/>
<dbReference type="EMDB" id="EMD-0950"/>
<dbReference type="EMDB" id="EMD-0951"/>
<dbReference type="EMDB" id="EMD-0952"/>
<dbReference type="EMDB" id="EMD-0953"/>
<dbReference type="EMDB" id="EMD-0954"/>
<dbReference type="EMDB" id="EMD-0955"/>
<dbReference type="EMDB" id="EMD-10262"/>
<dbReference type="EMDB" id="EMD-10713"/>
<dbReference type="EMDB" id="EMD-11096"/>
<dbReference type="EMDB" id="EMD-11160"/>
<dbReference type="EMDB" id="EMD-11357"/>
<dbReference type="EMDB" id="EMD-11358"/>
<dbReference type="EMDB" id="EMD-11359"/>
<dbReference type="EMDB" id="EMD-11361"/>
<dbReference type="EMDB" id="EMD-11362"/>
<dbReference type="EMDB" id="EMD-11363"/>
<dbReference type="EMDB" id="EMD-11608"/>
<dbReference type="EMDB" id="EMD-11807"/>
<dbReference type="EMDB" id="EMD-11808"/>
<dbReference type="EMDB" id="EMD-12081"/>
<dbReference type="EMDB" id="EMD-12534"/>
<dbReference type="EMDB" id="EMD-12535"/>
<dbReference type="EMDB" id="EMD-14979"/>
<dbReference type="EMDB" id="EMD-14990"/>
<dbReference type="EMDB" id="EMD-16191"/>
<dbReference type="EMDB" id="EMD-16347"/>
<dbReference type="EMDB" id="EMD-16349"/>
<dbReference type="EMDB" id="EMD-16525"/>
<dbReference type="EMDB" id="EMD-16533"/>
<dbReference type="EMDB" id="EMD-16541"/>
<dbReference type="EMDB" id="EMD-16563"/>
<dbReference type="EMDB" id="EMD-16591"/>
<dbReference type="EMDB" id="EMD-16594"/>
<dbReference type="EMDB" id="EMD-16609"/>
<dbReference type="EMDB" id="EMD-16616"/>
<dbReference type="EMDB" id="EMD-16634"/>
<dbReference type="EMDB" id="EMD-16648"/>
<dbReference type="EMDB" id="EMD-16684"/>
<dbReference type="EMDB" id="EMD-16702"/>
<dbReference type="EMDB" id="EMD-16729"/>
<dbReference type="EMDB" id="EMD-21644"/>
<dbReference type="EMDB" id="EMD-23934"/>
<dbReference type="EMDB" id="EMD-23935"/>
<dbReference type="EMDB" id="EMD-24235"/>
<dbReference type="EMDB" id="EMD-25441"/>
<dbReference type="EMDB" id="EMD-30574"/>
<dbReference type="EMDB" id="EMD-30584"/>
<dbReference type="EMDB" id="EMD-30585"/>
<dbReference type="EMDB" id="EMD-30588"/>
<dbReference type="EMDB" id="EMD-3461"/>
<dbReference type="EMDB" id="EMD-36839"/>
<dbReference type="EMDB" id="EMD-36945"/>
<dbReference type="EMDB" id="EMD-38660"/>
<dbReference type="EMDB" id="EMD-4140"/>
<dbReference type="EMDB" id="EMD-4214"/>
<dbReference type="EMDB" id="EMD-42525"/>
<dbReference type="EMDB" id="EMD-42540"/>
<dbReference type="EMDB" id="EMD-4427"/>
<dbReference type="EMDB" id="EMD-4792"/>
<dbReference type="EMDB" id="EMD-4793"/>
<dbReference type="EMDB" id="EMD-50259"/>
<dbReference type="EMDB" id="EMD-6695"/>
<dbReference type="EMDB" id="EMD-6696"/>
<dbReference type="EMDB" id="EMD-8473"/>
<dbReference type="EMDB" id="EMD-9964"/>
<dbReference type="SMR" id="P26783"/>
<dbReference type="BioGRID" id="33879">
    <property type="interactions" value="207"/>
</dbReference>
<dbReference type="ComplexPortal" id="CPX-1599">
    <property type="entry name" value="40S cytosolic small ribosomal subunit"/>
</dbReference>
<dbReference type="DIP" id="DIP-5092N"/>
<dbReference type="FunCoup" id="P26783">
    <property type="interactions" value="1343"/>
</dbReference>
<dbReference type="IntAct" id="P26783">
    <property type="interactions" value="129"/>
</dbReference>
<dbReference type="MINT" id="P26783"/>
<dbReference type="STRING" id="4932.YJR123W"/>
<dbReference type="CarbonylDB" id="P26783"/>
<dbReference type="iPTMnet" id="P26783"/>
<dbReference type="PaxDb" id="4932-YJR123W"/>
<dbReference type="PeptideAtlas" id="P26783"/>
<dbReference type="EnsemblFungi" id="YJR123W_mRNA">
    <property type="protein sequence ID" value="YJR123W"/>
    <property type="gene ID" value="YJR123W"/>
</dbReference>
<dbReference type="GeneID" id="853587"/>
<dbReference type="KEGG" id="sce:YJR123W"/>
<dbReference type="AGR" id="SGD:S000003884"/>
<dbReference type="SGD" id="S000003884">
    <property type="gene designation" value="RPS5"/>
</dbReference>
<dbReference type="VEuPathDB" id="FungiDB:YJR123W"/>
<dbReference type="eggNOG" id="KOG3291">
    <property type="taxonomic scope" value="Eukaryota"/>
</dbReference>
<dbReference type="GeneTree" id="ENSGT00390000010806"/>
<dbReference type="HOGENOM" id="CLU_063975_0_0_1"/>
<dbReference type="InParanoid" id="P26783"/>
<dbReference type="OMA" id="KMNIVER"/>
<dbReference type="OrthoDB" id="10264639at2759"/>
<dbReference type="BioCyc" id="YEAST:G3O-31744-MONOMER"/>
<dbReference type="Reactome" id="R-SCE-156827">
    <property type="pathway name" value="L13a-mediated translational silencing of Ceruloplasmin expression"/>
</dbReference>
<dbReference type="Reactome" id="R-SCE-1799339">
    <property type="pathway name" value="SRP-dependent cotranslational protein targeting to membrane"/>
</dbReference>
<dbReference type="Reactome" id="R-SCE-72649">
    <property type="pathway name" value="Translation initiation complex formation"/>
</dbReference>
<dbReference type="Reactome" id="R-SCE-72689">
    <property type="pathway name" value="Formation of a pool of free 40S subunits"/>
</dbReference>
<dbReference type="Reactome" id="R-SCE-72695">
    <property type="pathway name" value="Formation of the ternary complex, and subsequently, the 43S complex"/>
</dbReference>
<dbReference type="Reactome" id="R-SCE-72702">
    <property type="pathway name" value="Ribosomal scanning and start codon recognition"/>
</dbReference>
<dbReference type="Reactome" id="R-SCE-72706">
    <property type="pathway name" value="GTP hydrolysis and joining of the 60S ribosomal subunit"/>
</dbReference>
<dbReference type="Reactome" id="R-SCE-975956">
    <property type="pathway name" value="Nonsense Mediated Decay (NMD) independent of the Exon Junction Complex (EJC)"/>
</dbReference>
<dbReference type="Reactome" id="R-SCE-975957">
    <property type="pathway name" value="Nonsense Mediated Decay (NMD) enhanced by the Exon Junction Complex (EJC)"/>
</dbReference>
<dbReference type="BioGRID-ORCS" id="853587">
    <property type="hits" value="3 hits in 10 CRISPR screens"/>
</dbReference>
<dbReference type="EvolutionaryTrace" id="P26783"/>
<dbReference type="PRO" id="PR:P26783"/>
<dbReference type="Proteomes" id="UP000002311">
    <property type="component" value="Chromosome X"/>
</dbReference>
<dbReference type="RNAct" id="P26783">
    <property type="molecule type" value="protein"/>
</dbReference>
<dbReference type="GO" id="GO:0030686">
    <property type="term" value="C:90S preribosome"/>
    <property type="evidence" value="ECO:0007005"/>
    <property type="project" value="SGD"/>
</dbReference>
<dbReference type="GO" id="GO:0005737">
    <property type="term" value="C:cytoplasm"/>
    <property type="evidence" value="ECO:0000314"/>
    <property type="project" value="ComplexPortal"/>
</dbReference>
<dbReference type="GO" id="GO:0005829">
    <property type="term" value="C:cytosol"/>
    <property type="evidence" value="ECO:0000304"/>
    <property type="project" value="Reactome"/>
</dbReference>
<dbReference type="GO" id="GO:0022627">
    <property type="term" value="C:cytosolic small ribosomal subunit"/>
    <property type="evidence" value="ECO:0000314"/>
    <property type="project" value="SGD"/>
</dbReference>
<dbReference type="GO" id="GO:0005840">
    <property type="term" value="C:ribosome"/>
    <property type="evidence" value="ECO:0000318"/>
    <property type="project" value="GO_Central"/>
</dbReference>
<dbReference type="GO" id="GO:0003729">
    <property type="term" value="F:mRNA binding"/>
    <property type="evidence" value="ECO:0000318"/>
    <property type="project" value="GO_Central"/>
</dbReference>
<dbReference type="GO" id="GO:0019843">
    <property type="term" value="F:rRNA binding"/>
    <property type="evidence" value="ECO:0000318"/>
    <property type="project" value="GO_Central"/>
</dbReference>
<dbReference type="GO" id="GO:0003735">
    <property type="term" value="F:structural constituent of ribosome"/>
    <property type="evidence" value="ECO:0000314"/>
    <property type="project" value="SGD"/>
</dbReference>
<dbReference type="GO" id="GO:0002181">
    <property type="term" value="P:cytoplasmic translation"/>
    <property type="evidence" value="ECO:0000303"/>
    <property type="project" value="ComplexPortal"/>
</dbReference>
<dbReference type="GO" id="GO:0030490">
    <property type="term" value="P:maturation of SSU-rRNA"/>
    <property type="evidence" value="ECO:0000315"/>
    <property type="project" value="SGD"/>
</dbReference>
<dbReference type="GO" id="GO:0006450">
    <property type="term" value="P:regulation of translational fidelity"/>
    <property type="evidence" value="ECO:0000247"/>
    <property type="project" value="SGD"/>
</dbReference>
<dbReference type="GO" id="GO:0000028">
    <property type="term" value="P:ribosomal small subunit assembly"/>
    <property type="evidence" value="ECO:0000318"/>
    <property type="project" value="GO_Central"/>
</dbReference>
<dbReference type="GO" id="GO:0000054">
    <property type="term" value="P:ribosomal subunit export from nucleus"/>
    <property type="evidence" value="ECO:0000315"/>
    <property type="project" value="SGD"/>
</dbReference>
<dbReference type="GO" id="GO:0006412">
    <property type="term" value="P:translation"/>
    <property type="evidence" value="ECO:0000318"/>
    <property type="project" value="GO_Central"/>
</dbReference>
<dbReference type="CDD" id="cd14867">
    <property type="entry name" value="uS7_Eukaryote"/>
    <property type="match status" value="1"/>
</dbReference>
<dbReference type="FunFam" id="1.10.455.10:FF:000002">
    <property type="entry name" value="40S ribosomal protein S5"/>
    <property type="match status" value="1"/>
</dbReference>
<dbReference type="Gene3D" id="1.10.455.10">
    <property type="entry name" value="Ribosomal protein S7 domain"/>
    <property type="match status" value="1"/>
</dbReference>
<dbReference type="InterPro" id="IPR000235">
    <property type="entry name" value="Ribosomal_uS7"/>
</dbReference>
<dbReference type="InterPro" id="IPR020606">
    <property type="entry name" value="Ribosomal_uS7_CS"/>
</dbReference>
<dbReference type="InterPro" id="IPR023798">
    <property type="entry name" value="Ribosomal_uS7_dom"/>
</dbReference>
<dbReference type="InterPro" id="IPR036823">
    <property type="entry name" value="Ribosomal_uS7_dom_sf"/>
</dbReference>
<dbReference type="InterPro" id="IPR005716">
    <property type="entry name" value="Ribosomal_uS7_euk/arc"/>
</dbReference>
<dbReference type="NCBIfam" id="NF003106">
    <property type="entry name" value="PRK04027.1"/>
    <property type="match status" value="1"/>
</dbReference>
<dbReference type="NCBIfam" id="TIGR01028">
    <property type="entry name" value="uS7_euk_arch"/>
    <property type="match status" value="1"/>
</dbReference>
<dbReference type="PANTHER" id="PTHR11205">
    <property type="entry name" value="RIBOSOMAL PROTEIN S7"/>
    <property type="match status" value="1"/>
</dbReference>
<dbReference type="Pfam" id="PF00177">
    <property type="entry name" value="Ribosomal_S7"/>
    <property type="match status" value="1"/>
</dbReference>
<dbReference type="PIRSF" id="PIRSF002122">
    <property type="entry name" value="RPS7p_RPS7a_RPS5e_RPS7o"/>
    <property type="match status" value="1"/>
</dbReference>
<dbReference type="SUPFAM" id="SSF47973">
    <property type="entry name" value="Ribosomal protein S7"/>
    <property type="match status" value="1"/>
</dbReference>
<dbReference type="PROSITE" id="PS00052">
    <property type="entry name" value="RIBOSOMAL_S7"/>
    <property type="match status" value="1"/>
</dbReference>
<gene>
    <name evidence="5" type="primary">RPS5</name>
    <name type="synonym">RPS2</name>
    <name type="ordered locus">YJR123W</name>
    <name type="ORF">J2045</name>
</gene>
<name>RS5_YEAST</name>
<evidence type="ECO:0000269" key="1">
    <source>
    </source>
</evidence>
<evidence type="ECO:0000269" key="2">
    <source>
    </source>
</evidence>
<evidence type="ECO:0000269" key="3">
    <source>
    </source>
</evidence>
<evidence type="ECO:0000303" key="4">
    <source>
    </source>
</evidence>
<evidence type="ECO:0000303" key="5">
    <source>
    </source>
</evidence>
<evidence type="ECO:0000305" key="6"/>
<evidence type="ECO:0000305" key="7">
    <source>
    </source>
</evidence>
<evidence type="ECO:0000305" key="8">
    <source>
    </source>
</evidence>
<evidence type="ECO:0007744" key="9">
    <source>
    </source>
</evidence>
<evidence type="ECO:0007744" key="10">
    <source>
    </source>
</evidence>
<evidence type="ECO:0007829" key="11">
    <source>
        <dbReference type="PDB" id="6FAI"/>
    </source>
</evidence>
<evidence type="ECO:0007829" key="12">
    <source>
        <dbReference type="PDB" id="6ZVI"/>
    </source>
</evidence>
<evidence type="ECO:0007829" key="13">
    <source>
        <dbReference type="PDB" id="7A1G"/>
    </source>
</evidence>
<evidence type="ECO:0007829" key="14">
    <source>
        <dbReference type="PDB" id="8C01"/>
    </source>
</evidence>
<feature type="initiator methionine" description="Removed" evidence="1 2">
    <location>
        <position position="1"/>
    </location>
</feature>
<feature type="chain" id="PRO_0000124540" description="Small ribosomal subunit protein uS7">
    <location>
        <begin position="2"/>
        <end position="225"/>
    </location>
</feature>
<feature type="modified residue" description="N-acetylserine" evidence="1 2">
    <location>
        <position position="2"/>
    </location>
</feature>
<feature type="modified residue" description="Phosphothreonine" evidence="9">
    <location>
        <position position="27"/>
    </location>
</feature>
<feature type="cross-link" description="Glycyl lysine isopeptide (Lys-Gly) (interchain with G-Cter in ubiquitin)" evidence="10">
    <location>
        <position position="45"/>
    </location>
</feature>
<feature type="cross-link" description="Glycyl lysine isopeptide (Lys-Gly) (interchain with G-Cter in ubiquitin)" evidence="10">
    <location>
        <position position="203"/>
    </location>
</feature>
<feature type="sequence conflict" description="In Ref. 5; AA sequence." evidence="6" ref="5">
    <original>T</original>
    <variation>E</variation>
    <location>
        <position position="21"/>
    </location>
</feature>
<feature type="helix" evidence="14">
    <location>
        <begin position="31"/>
        <end position="34"/>
    </location>
</feature>
<feature type="helix" evidence="14">
    <location>
        <begin position="35"/>
        <end position="37"/>
    </location>
</feature>
<feature type="strand" evidence="12">
    <location>
        <begin position="38"/>
        <end position="40"/>
    </location>
</feature>
<feature type="turn" evidence="14">
    <location>
        <begin position="43"/>
        <end position="45"/>
    </location>
</feature>
<feature type="helix" evidence="14">
    <location>
        <begin position="56"/>
        <end position="61"/>
    </location>
</feature>
<feature type="strand" evidence="14">
    <location>
        <begin position="69"/>
        <end position="71"/>
    </location>
</feature>
<feature type="strand" evidence="14">
    <location>
        <begin position="78"/>
        <end position="80"/>
    </location>
</feature>
<feature type="helix" evidence="14">
    <location>
        <begin position="83"/>
        <end position="86"/>
    </location>
</feature>
<feature type="helix" evidence="14">
    <location>
        <begin position="89"/>
        <end position="95"/>
    </location>
</feature>
<feature type="helix" evidence="14">
    <location>
        <begin position="101"/>
        <end position="103"/>
    </location>
</feature>
<feature type="helix" evidence="14">
    <location>
        <begin position="107"/>
        <end position="121"/>
    </location>
</feature>
<feature type="strand" evidence="13">
    <location>
        <begin position="125"/>
        <end position="127"/>
    </location>
</feature>
<feature type="helix" evidence="14">
    <location>
        <begin position="129"/>
        <end position="140"/>
    </location>
</feature>
<feature type="strand" evidence="14">
    <location>
        <begin position="143"/>
        <end position="148"/>
    </location>
</feature>
<feature type="turn" evidence="12">
    <location>
        <begin position="151"/>
        <end position="154"/>
    </location>
</feature>
<feature type="strand" evidence="14">
    <location>
        <begin position="157"/>
        <end position="161"/>
    </location>
</feature>
<feature type="helix" evidence="14">
    <location>
        <begin position="164"/>
        <end position="182"/>
    </location>
</feature>
<feature type="turn" evidence="14">
    <location>
        <begin position="183"/>
        <end position="185"/>
    </location>
</feature>
<feature type="strand" evidence="12">
    <location>
        <begin position="186"/>
        <end position="188"/>
    </location>
</feature>
<feature type="helix" evidence="14">
    <location>
        <begin position="190"/>
        <end position="202"/>
    </location>
</feature>
<feature type="strand" evidence="11">
    <location>
        <begin position="206"/>
        <end position="208"/>
    </location>
</feature>
<feature type="helix" evidence="14">
    <location>
        <begin position="209"/>
        <end position="224"/>
    </location>
</feature>
<accession>P26783</accession>
<accession>D6VWU2</accession>